<accession>Q1C9A6</accession>
<keyword id="KW-0408">Iron</keyword>
<keyword id="KW-0456">Lyase</keyword>
<keyword id="KW-0464">Manganese</keyword>
<gene>
    <name evidence="1" type="primary">uxuA</name>
    <name type="ordered locus">YPA_0999</name>
</gene>
<comment type="function">
    <text evidence="1">Catalyzes the dehydration of D-mannonate.</text>
</comment>
<comment type="catalytic activity">
    <reaction evidence="1">
        <text>D-mannonate = 2-dehydro-3-deoxy-D-gluconate + H2O</text>
        <dbReference type="Rhea" id="RHEA:20097"/>
        <dbReference type="ChEBI" id="CHEBI:15377"/>
        <dbReference type="ChEBI" id="CHEBI:17767"/>
        <dbReference type="ChEBI" id="CHEBI:57990"/>
        <dbReference type="EC" id="4.2.1.8"/>
    </reaction>
</comment>
<comment type="cofactor">
    <cofactor evidence="1">
        <name>Fe(2+)</name>
        <dbReference type="ChEBI" id="CHEBI:29033"/>
    </cofactor>
    <cofactor evidence="1">
        <name>Mn(2+)</name>
        <dbReference type="ChEBI" id="CHEBI:29035"/>
    </cofactor>
</comment>
<comment type="pathway">
    <text evidence="1">Carbohydrate metabolism; pentose and glucuronate interconversion.</text>
</comment>
<comment type="similarity">
    <text evidence="1">Belongs to the mannonate dehydratase family.</text>
</comment>
<sequence length="397" mass="44918">MEQTWRWYGPNDPVSLDDIRQAGATGVVTALHHIPNGVVWPVSEIKQRQAELAAKNLVWSVVESVPIHEDIKTHSGNYQQYIENYQQTLRNIAECGIDTVCYNFMPILDWTRTDLEYELPDGSKALRFDQIAFAAFELHILKRPGASNDYTAEEQVQAEAYFNAMTEADIAKLTGNIIAGLPGAEEGYTLDQFRVRLAEYDGIDKAQLRENMAYFLRAIIPVAEQVGLRMAVHPDDPPRPILGLPRIVSTIEDMQWLKETVDSIHNGFTMCTGSYGVRADNDLVKMIETFGDRIHFTHLRSTCREGNPKTFHEGGHLQGDVDMYSVVKAILTEEQRRQSLGDMRPIPMRPDHGHQMLDDLHKKTNPGYSAIGRLKGLAEVRGVELALKRTFFPELKQ</sequence>
<reference key="1">
    <citation type="journal article" date="2006" name="J. Bacteriol.">
        <title>Complete genome sequence of Yersinia pestis strains Antiqua and Nepal516: evidence of gene reduction in an emerging pathogen.</title>
        <authorList>
            <person name="Chain P.S.G."/>
            <person name="Hu P."/>
            <person name="Malfatti S.A."/>
            <person name="Radnedge L."/>
            <person name="Larimer F."/>
            <person name="Vergez L.M."/>
            <person name="Worsham P."/>
            <person name="Chu M.C."/>
            <person name="Andersen G.L."/>
        </authorList>
    </citation>
    <scope>NUCLEOTIDE SEQUENCE [LARGE SCALE GENOMIC DNA]</scope>
    <source>
        <strain>Antiqua</strain>
    </source>
</reference>
<organism>
    <name type="scientific">Yersinia pestis bv. Antiqua (strain Antiqua)</name>
    <dbReference type="NCBI Taxonomy" id="360102"/>
    <lineage>
        <taxon>Bacteria</taxon>
        <taxon>Pseudomonadati</taxon>
        <taxon>Pseudomonadota</taxon>
        <taxon>Gammaproteobacteria</taxon>
        <taxon>Enterobacterales</taxon>
        <taxon>Yersiniaceae</taxon>
        <taxon>Yersinia</taxon>
    </lineage>
</organism>
<feature type="chain" id="PRO_1000034342" description="Mannonate dehydratase">
    <location>
        <begin position="1"/>
        <end position="397"/>
    </location>
</feature>
<evidence type="ECO:0000255" key="1">
    <source>
        <dbReference type="HAMAP-Rule" id="MF_00106"/>
    </source>
</evidence>
<name>UXUA_YERPA</name>
<dbReference type="EC" id="4.2.1.8" evidence="1"/>
<dbReference type="EMBL" id="CP000308">
    <property type="protein sequence ID" value="ABG12966.1"/>
    <property type="molecule type" value="Genomic_DNA"/>
</dbReference>
<dbReference type="RefSeq" id="WP_002264754.1">
    <property type="nucleotide sequence ID" value="NC_008150.1"/>
</dbReference>
<dbReference type="SMR" id="Q1C9A6"/>
<dbReference type="KEGG" id="ypa:YPA_0999"/>
<dbReference type="UniPathway" id="UPA00246"/>
<dbReference type="Proteomes" id="UP000001971">
    <property type="component" value="Chromosome"/>
</dbReference>
<dbReference type="GO" id="GO:0008198">
    <property type="term" value="F:ferrous iron binding"/>
    <property type="evidence" value="ECO:0007669"/>
    <property type="project" value="TreeGrafter"/>
</dbReference>
<dbReference type="GO" id="GO:0030145">
    <property type="term" value="F:manganese ion binding"/>
    <property type="evidence" value="ECO:0007669"/>
    <property type="project" value="TreeGrafter"/>
</dbReference>
<dbReference type="GO" id="GO:0008927">
    <property type="term" value="F:mannonate dehydratase activity"/>
    <property type="evidence" value="ECO:0007669"/>
    <property type="project" value="UniProtKB-UniRule"/>
</dbReference>
<dbReference type="GO" id="GO:0042840">
    <property type="term" value="P:D-glucuronate catabolic process"/>
    <property type="evidence" value="ECO:0007669"/>
    <property type="project" value="TreeGrafter"/>
</dbReference>
<dbReference type="FunFam" id="3.20.20.150:FF:000010">
    <property type="entry name" value="Mannonate dehydratase"/>
    <property type="match status" value="1"/>
</dbReference>
<dbReference type="Gene3D" id="3.20.20.150">
    <property type="entry name" value="Divalent-metal-dependent TIM barrel enzymes"/>
    <property type="match status" value="1"/>
</dbReference>
<dbReference type="HAMAP" id="MF_00106">
    <property type="entry name" value="UxuA"/>
    <property type="match status" value="1"/>
</dbReference>
<dbReference type="InterPro" id="IPR004628">
    <property type="entry name" value="Man_deHydtase"/>
</dbReference>
<dbReference type="InterPro" id="IPR036237">
    <property type="entry name" value="Xyl_isomerase-like_sf"/>
</dbReference>
<dbReference type="NCBIfam" id="NF003027">
    <property type="entry name" value="PRK03906.1"/>
    <property type="match status" value="1"/>
</dbReference>
<dbReference type="NCBIfam" id="TIGR00695">
    <property type="entry name" value="uxuA"/>
    <property type="match status" value="1"/>
</dbReference>
<dbReference type="PANTHER" id="PTHR30387">
    <property type="entry name" value="MANNONATE DEHYDRATASE"/>
    <property type="match status" value="1"/>
</dbReference>
<dbReference type="PANTHER" id="PTHR30387:SF2">
    <property type="entry name" value="MANNONATE DEHYDRATASE"/>
    <property type="match status" value="1"/>
</dbReference>
<dbReference type="Pfam" id="PF03786">
    <property type="entry name" value="UxuA"/>
    <property type="match status" value="1"/>
</dbReference>
<dbReference type="PIRSF" id="PIRSF016049">
    <property type="entry name" value="Man_dehyd"/>
    <property type="match status" value="1"/>
</dbReference>
<dbReference type="SUPFAM" id="SSF51658">
    <property type="entry name" value="Xylose isomerase-like"/>
    <property type="match status" value="1"/>
</dbReference>
<proteinExistence type="inferred from homology"/>
<protein>
    <recommendedName>
        <fullName evidence="1">Mannonate dehydratase</fullName>
        <ecNumber evidence="1">4.2.1.8</ecNumber>
    </recommendedName>
    <alternativeName>
        <fullName evidence="1">D-mannonate hydro-lyase</fullName>
    </alternativeName>
</protein>